<reference key="1">
    <citation type="journal article" date="2003" name="Nature">
        <title>Unique physiological and pathogenic features of Leptospira interrogans revealed by whole-genome sequencing.</title>
        <authorList>
            <person name="Ren S.-X."/>
            <person name="Fu G."/>
            <person name="Jiang X.-G."/>
            <person name="Zeng R."/>
            <person name="Miao Y.-G."/>
            <person name="Xu H."/>
            <person name="Zhang Y.-X."/>
            <person name="Xiong H."/>
            <person name="Lu G."/>
            <person name="Lu L.-F."/>
            <person name="Jiang H.-Q."/>
            <person name="Jia J."/>
            <person name="Tu Y.-F."/>
            <person name="Jiang J.-X."/>
            <person name="Gu W.-Y."/>
            <person name="Zhang Y.-Q."/>
            <person name="Cai Z."/>
            <person name="Sheng H.-H."/>
            <person name="Yin H.-F."/>
            <person name="Zhang Y."/>
            <person name="Zhu G.-F."/>
            <person name="Wan M."/>
            <person name="Huang H.-L."/>
            <person name="Qian Z."/>
            <person name="Wang S.-Y."/>
            <person name="Ma W."/>
            <person name="Yao Z.-J."/>
            <person name="Shen Y."/>
            <person name="Qiang B.-Q."/>
            <person name="Xia Q.-C."/>
            <person name="Guo X.-K."/>
            <person name="Danchin A."/>
            <person name="Saint Girons I."/>
            <person name="Somerville R.L."/>
            <person name="Wen Y.-M."/>
            <person name="Shi M.-H."/>
            <person name="Chen Z."/>
            <person name="Xu J.-G."/>
            <person name="Zhao G.-P."/>
        </authorList>
    </citation>
    <scope>NUCLEOTIDE SEQUENCE [LARGE SCALE GENOMIC DNA]</scope>
    <source>
        <strain>56601</strain>
    </source>
</reference>
<sequence length="104" mass="11879">MYAIISVGNRQYKVTQDQEFLTEKTGKNAGESFDAKVLLFAESNNKVHIGQPELKTARVSLKVLEDVKGDKIHGYVYKRRKNYQKAWGHRQQLQKVKVVSLSAV</sequence>
<gene>
    <name evidence="1" type="primary">rplU</name>
    <name type="ordered locus">LA_0848</name>
</gene>
<evidence type="ECO:0000255" key="1">
    <source>
        <dbReference type="HAMAP-Rule" id="MF_01363"/>
    </source>
</evidence>
<evidence type="ECO:0000305" key="2"/>
<comment type="function">
    <text evidence="1">This protein binds to 23S rRNA in the presence of protein L20.</text>
</comment>
<comment type="subunit">
    <text evidence="1">Part of the 50S ribosomal subunit. Contacts protein L20.</text>
</comment>
<comment type="similarity">
    <text evidence="1">Belongs to the bacterial ribosomal protein bL21 family.</text>
</comment>
<name>RL21_LEPIN</name>
<keyword id="KW-1185">Reference proteome</keyword>
<keyword id="KW-0687">Ribonucleoprotein</keyword>
<keyword id="KW-0689">Ribosomal protein</keyword>
<keyword id="KW-0694">RNA-binding</keyword>
<keyword id="KW-0699">rRNA-binding</keyword>
<protein>
    <recommendedName>
        <fullName evidence="1">Large ribosomal subunit protein bL21</fullName>
    </recommendedName>
    <alternativeName>
        <fullName evidence="2">50S ribosomal protein L21</fullName>
    </alternativeName>
</protein>
<organism>
    <name type="scientific">Leptospira interrogans serogroup Icterohaemorrhagiae serovar Lai (strain 56601)</name>
    <dbReference type="NCBI Taxonomy" id="189518"/>
    <lineage>
        <taxon>Bacteria</taxon>
        <taxon>Pseudomonadati</taxon>
        <taxon>Spirochaetota</taxon>
        <taxon>Spirochaetia</taxon>
        <taxon>Leptospirales</taxon>
        <taxon>Leptospiraceae</taxon>
        <taxon>Leptospira</taxon>
    </lineage>
</organism>
<accession>Q8F7U3</accession>
<proteinExistence type="inferred from homology"/>
<feature type="chain" id="PRO_0000270681" description="Large ribosomal subunit protein bL21">
    <location>
        <begin position="1"/>
        <end position="104"/>
    </location>
</feature>
<dbReference type="EMBL" id="AE010300">
    <property type="protein sequence ID" value="AAN48048.1"/>
    <property type="molecule type" value="Genomic_DNA"/>
</dbReference>
<dbReference type="RefSeq" id="NP_711030.1">
    <property type="nucleotide sequence ID" value="NC_004342.2"/>
</dbReference>
<dbReference type="RefSeq" id="WP_000270913.1">
    <property type="nucleotide sequence ID" value="NC_004342.2"/>
</dbReference>
<dbReference type="SMR" id="Q8F7U3"/>
<dbReference type="FunCoup" id="Q8F7U3">
    <property type="interactions" value="532"/>
</dbReference>
<dbReference type="STRING" id="189518.LA_0848"/>
<dbReference type="PaxDb" id="189518-LA_0848"/>
<dbReference type="EnsemblBacteria" id="AAN48048">
    <property type="protein sequence ID" value="AAN48048"/>
    <property type="gene ID" value="LA_0848"/>
</dbReference>
<dbReference type="GeneID" id="61142654"/>
<dbReference type="KEGG" id="lil:LA_0848"/>
<dbReference type="PATRIC" id="fig|189518.3.peg.853"/>
<dbReference type="HOGENOM" id="CLU_061463_3_2_12"/>
<dbReference type="InParanoid" id="Q8F7U3"/>
<dbReference type="OrthoDB" id="9813334at2"/>
<dbReference type="Proteomes" id="UP000001408">
    <property type="component" value="Chromosome I"/>
</dbReference>
<dbReference type="GO" id="GO:0005737">
    <property type="term" value="C:cytoplasm"/>
    <property type="evidence" value="ECO:0007669"/>
    <property type="project" value="UniProtKB-ARBA"/>
</dbReference>
<dbReference type="GO" id="GO:1990904">
    <property type="term" value="C:ribonucleoprotein complex"/>
    <property type="evidence" value="ECO:0007669"/>
    <property type="project" value="UniProtKB-KW"/>
</dbReference>
<dbReference type="GO" id="GO:0005840">
    <property type="term" value="C:ribosome"/>
    <property type="evidence" value="ECO:0007669"/>
    <property type="project" value="UniProtKB-KW"/>
</dbReference>
<dbReference type="GO" id="GO:0019843">
    <property type="term" value="F:rRNA binding"/>
    <property type="evidence" value="ECO:0007669"/>
    <property type="project" value="UniProtKB-UniRule"/>
</dbReference>
<dbReference type="GO" id="GO:0003735">
    <property type="term" value="F:structural constituent of ribosome"/>
    <property type="evidence" value="ECO:0007669"/>
    <property type="project" value="InterPro"/>
</dbReference>
<dbReference type="GO" id="GO:0006412">
    <property type="term" value="P:translation"/>
    <property type="evidence" value="ECO:0007669"/>
    <property type="project" value="UniProtKB-UniRule"/>
</dbReference>
<dbReference type="HAMAP" id="MF_01363">
    <property type="entry name" value="Ribosomal_bL21"/>
    <property type="match status" value="1"/>
</dbReference>
<dbReference type="InterPro" id="IPR028909">
    <property type="entry name" value="bL21-like"/>
</dbReference>
<dbReference type="InterPro" id="IPR036164">
    <property type="entry name" value="bL21-like_sf"/>
</dbReference>
<dbReference type="InterPro" id="IPR001787">
    <property type="entry name" value="Ribosomal_bL21"/>
</dbReference>
<dbReference type="NCBIfam" id="TIGR00061">
    <property type="entry name" value="L21"/>
    <property type="match status" value="1"/>
</dbReference>
<dbReference type="PANTHER" id="PTHR21349">
    <property type="entry name" value="50S RIBOSOMAL PROTEIN L21"/>
    <property type="match status" value="1"/>
</dbReference>
<dbReference type="PANTHER" id="PTHR21349:SF0">
    <property type="entry name" value="LARGE RIBOSOMAL SUBUNIT PROTEIN BL21M"/>
    <property type="match status" value="1"/>
</dbReference>
<dbReference type="Pfam" id="PF00829">
    <property type="entry name" value="Ribosomal_L21p"/>
    <property type="match status" value="1"/>
</dbReference>
<dbReference type="SUPFAM" id="SSF141091">
    <property type="entry name" value="L21p-like"/>
    <property type="match status" value="1"/>
</dbReference>